<evidence type="ECO:0000255" key="1">
    <source>
        <dbReference type="HAMAP-Rule" id="MF_01668"/>
    </source>
</evidence>
<dbReference type="EC" id="2.7.1.92" evidence="1"/>
<dbReference type="EMBL" id="AE017355">
    <property type="protein sequence ID" value="AAT59936.1"/>
    <property type="molecule type" value="Genomic_DNA"/>
</dbReference>
<dbReference type="RefSeq" id="WP_001068622.1">
    <property type="nucleotide sequence ID" value="NC_005957.1"/>
</dbReference>
<dbReference type="RefSeq" id="YP_036622.1">
    <property type="nucleotide sequence ID" value="NC_005957.1"/>
</dbReference>
<dbReference type="SMR" id="Q6HIK4"/>
<dbReference type="KEGG" id="btk:BT9727_2296"/>
<dbReference type="PATRIC" id="fig|281309.8.peg.2428"/>
<dbReference type="HOGENOM" id="CLU_027634_6_0_9"/>
<dbReference type="UniPathway" id="UPA00076">
    <property type="reaction ID" value="UER00146"/>
</dbReference>
<dbReference type="Proteomes" id="UP000001301">
    <property type="component" value="Chromosome"/>
</dbReference>
<dbReference type="GO" id="GO:0047590">
    <property type="term" value="F:5-dehydro-2-deoxygluconokinase activity"/>
    <property type="evidence" value="ECO:0007669"/>
    <property type="project" value="UniProtKB-UniRule"/>
</dbReference>
<dbReference type="GO" id="GO:0005524">
    <property type="term" value="F:ATP binding"/>
    <property type="evidence" value="ECO:0007669"/>
    <property type="project" value="UniProtKB-UniRule"/>
</dbReference>
<dbReference type="GO" id="GO:0019310">
    <property type="term" value="P:inositol catabolic process"/>
    <property type="evidence" value="ECO:0007669"/>
    <property type="project" value="UniProtKB-UniRule"/>
</dbReference>
<dbReference type="CDD" id="cd01166">
    <property type="entry name" value="KdgK"/>
    <property type="match status" value="1"/>
</dbReference>
<dbReference type="Gene3D" id="3.40.1190.20">
    <property type="match status" value="1"/>
</dbReference>
<dbReference type="Gene3D" id="2.20.150.10">
    <property type="entry name" value="putative 5-dehydro-2- deoxygluconokinase"/>
    <property type="match status" value="1"/>
</dbReference>
<dbReference type="HAMAP" id="MF_01668">
    <property type="entry name" value="IolC"/>
    <property type="match status" value="1"/>
</dbReference>
<dbReference type="InterPro" id="IPR002173">
    <property type="entry name" value="Carboh/pur_kinase_PfkB_CS"/>
</dbReference>
<dbReference type="InterPro" id="IPR022841">
    <property type="entry name" value="DKG_kinase_firmi"/>
</dbReference>
<dbReference type="InterPro" id="IPR030830">
    <property type="entry name" value="Myo_inos_IolC"/>
</dbReference>
<dbReference type="InterPro" id="IPR023314">
    <property type="entry name" value="Myo_inos_IolC-like_sf"/>
</dbReference>
<dbReference type="InterPro" id="IPR050306">
    <property type="entry name" value="PfkB_Carbo_kinase"/>
</dbReference>
<dbReference type="InterPro" id="IPR011611">
    <property type="entry name" value="PfkB_dom"/>
</dbReference>
<dbReference type="InterPro" id="IPR029056">
    <property type="entry name" value="Ribokinase-like"/>
</dbReference>
<dbReference type="NCBIfam" id="TIGR04382">
    <property type="entry name" value="myo_inos_iolC_N"/>
    <property type="match status" value="1"/>
</dbReference>
<dbReference type="PANTHER" id="PTHR43085:SF49">
    <property type="entry name" value="5-DEHYDRO-2-DEOXYGLUCONOKINASE"/>
    <property type="match status" value="1"/>
</dbReference>
<dbReference type="PANTHER" id="PTHR43085">
    <property type="entry name" value="HEXOKINASE FAMILY MEMBER"/>
    <property type="match status" value="1"/>
</dbReference>
<dbReference type="Pfam" id="PF00294">
    <property type="entry name" value="PfkB"/>
    <property type="match status" value="1"/>
</dbReference>
<dbReference type="SUPFAM" id="SSF53613">
    <property type="entry name" value="Ribokinase-like"/>
    <property type="match status" value="1"/>
</dbReference>
<dbReference type="PROSITE" id="PS00584">
    <property type="entry name" value="PFKB_KINASES_2"/>
    <property type="match status" value="1"/>
</dbReference>
<proteinExistence type="inferred from homology"/>
<accession>Q6HIK4</accession>
<organism>
    <name type="scientific">Bacillus thuringiensis subsp. konkukian (strain 97-27)</name>
    <dbReference type="NCBI Taxonomy" id="281309"/>
    <lineage>
        <taxon>Bacteria</taxon>
        <taxon>Bacillati</taxon>
        <taxon>Bacillota</taxon>
        <taxon>Bacilli</taxon>
        <taxon>Bacillales</taxon>
        <taxon>Bacillaceae</taxon>
        <taxon>Bacillus</taxon>
        <taxon>Bacillus cereus group</taxon>
    </lineage>
</organism>
<name>IOLC_BACHK</name>
<comment type="function">
    <text evidence="1">Catalyzes the phosphorylation of 5-dehydro-2-deoxy-D-gluconate (2-deoxy-5-keto-D-gluconate or DKG) to 6-phospho-5-dehydro-2-deoxy-D-gluconate (DKGP).</text>
</comment>
<comment type="catalytic activity">
    <reaction evidence="1">
        <text>5-dehydro-2-deoxy-D-gluconate + ATP = 6-phospho-5-dehydro-2-deoxy-D-gluconate + ADP + H(+)</text>
        <dbReference type="Rhea" id="RHEA:13497"/>
        <dbReference type="ChEBI" id="CHEBI:15378"/>
        <dbReference type="ChEBI" id="CHEBI:16669"/>
        <dbReference type="ChEBI" id="CHEBI:30616"/>
        <dbReference type="ChEBI" id="CHEBI:57949"/>
        <dbReference type="ChEBI" id="CHEBI:456216"/>
        <dbReference type="EC" id="2.7.1.92"/>
    </reaction>
</comment>
<comment type="pathway">
    <text evidence="1">Polyol metabolism; myo-inositol degradation into acetyl-CoA; acetyl-CoA from myo-inositol: step 5/7.</text>
</comment>
<comment type="similarity">
    <text evidence="1">Belongs to the carbohydrate kinase PfkB family.</text>
</comment>
<protein>
    <recommendedName>
        <fullName evidence="1">5-dehydro-2-deoxygluconokinase</fullName>
        <ecNumber evidence="1">2.7.1.92</ecNumber>
    </recommendedName>
    <alternativeName>
        <fullName evidence="1">2-deoxy-5-keto-D-gluconate kinase</fullName>
        <shortName evidence="1">DKG kinase</shortName>
    </alternativeName>
</protein>
<feature type="chain" id="PRO_0000352292" description="5-dehydro-2-deoxygluconokinase">
    <location>
        <begin position="1"/>
        <end position="332"/>
    </location>
</feature>
<sequence>MNPLIFKGNRPFDLIAVGRLCVDLNANETQRPMEETRTFTKYVGGSPANIAIGAARLGLQTGFIGKVSDDQMGRFITGYLKDNKINTDQIPIDCTGAVTGLAFTEIKSPEDCSILMYRDNVADLNLDPTEVSEDYIKQSKALLISGTALAKSPSREAVFLALEYARKHDVVVFFDVDYRPYTWQSEAETAVYYNLAAEKSDVIIGTREEFDMMEKLLNYEKSNDQVTAERWFSHHAKIVVIKHGGDGSIAYTRDGQSHRGGIFKTKVLKTFGAGDSYASAFIYGLMQGLEIPQAMRLGGASASIVISKHSCSDAMPTRAEISAFMETAEELV</sequence>
<gene>
    <name evidence="1" type="primary">iolC</name>
    <name type="ordered locus">BT9727_2296</name>
</gene>
<keyword id="KW-0067">ATP-binding</keyword>
<keyword id="KW-0418">Kinase</keyword>
<keyword id="KW-0547">Nucleotide-binding</keyword>
<keyword id="KW-0808">Transferase</keyword>
<reference key="1">
    <citation type="journal article" date="2006" name="J. Bacteriol.">
        <title>Pathogenomic sequence analysis of Bacillus cereus and Bacillus thuringiensis isolates closely related to Bacillus anthracis.</title>
        <authorList>
            <person name="Han C.S."/>
            <person name="Xie G."/>
            <person name="Challacombe J.F."/>
            <person name="Altherr M.R."/>
            <person name="Bhotika S.S."/>
            <person name="Bruce D."/>
            <person name="Campbell C.S."/>
            <person name="Campbell M.L."/>
            <person name="Chen J."/>
            <person name="Chertkov O."/>
            <person name="Cleland C."/>
            <person name="Dimitrijevic M."/>
            <person name="Doggett N.A."/>
            <person name="Fawcett J.J."/>
            <person name="Glavina T."/>
            <person name="Goodwin L.A."/>
            <person name="Hill K.K."/>
            <person name="Hitchcock P."/>
            <person name="Jackson P.J."/>
            <person name="Keim P."/>
            <person name="Kewalramani A.R."/>
            <person name="Longmire J."/>
            <person name="Lucas S."/>
            <person name="Malfatti S."/>
            <person name="McMurry K."/>
            <person name="Meincke L.J."/>
            <person name="Misra M."/>
            <person name="Moseman B.L."/>
            <person name="Mundt M."/>
            <person name="Munk A.C."/>
            <person name="Okinaka R.T."/>
            <person name="Parson-Quintana B."/>
            <person name="Reilly L.P."/>
            <person name="Richardson P."/>
            <person name="Robinson D.L."/>
            <person name="Rubin E."/>
            <person name="Saunders E."/>
            <person name="Tapia R."/>
            <person name="Tesmer J.G."/>
            <person name="Thayer N."/>
            <person name="Thompson L.S."/>
            <person name="Tice H."/>
            <person name="Ticknor L.O."/>
            <person name="Wills P.L."/>
            <person name="Brettin T.S."/>
            <person name="Gilna P."/>
        </authorList>
    </citation>
    <scope>NUCLEOTIDE SEQUENCE [LARGE SCALE GENOMIC DNA]</scope>
    <source>
        <strain>97-27</strain>
    </source>
</reference>